<accession>Q5XHG6</accession>
<feature type="chain" id="PRO_0000219276" description="Tetraspanin-31-A">
    <location>
        <begin position="1"/>
        <end position="212"/>
    </location>
</feature>
<feature type="topological domain" description="Cytoplasmic" evidence="2">
    <location>
        <begin position="1"/>
        <end position="12"/>
    </location>
</feature>
<feature type="transmembrane region" description="Helical" evidence="2">
    <location>
        <begin position="13"/>
        <end position="33"/>
    </location>
</feature>
<feature type="topological domain" description="Extracellular" evidence="2">
    <location>
        <begin position="34"/>
        <end position="44"/>
    </location>
</feature>
<feature type="transmembrane region" description="Helical" evidence="2">
    <location>
        <begin position="45"/>
        <end position="65"/>
    </location>
</feature>
<feature type="topological domain" description="Cytoplasmic" evidence="2">
    <location>
        <begin position="66"/>
        <end position="72"/>
    </location>
</feature>
<feature type="transmembrane region" description="Helical" evidence="2">
    <location>
        <begin position="73"/>
        <end position="93"/>
    </location>
</feature>
<feature type="topological domain" description="Extracellular" evidence="2">
    <location>
        <begin position="94"/>
        <end position="175"/>
    </location>
</feature>
<feature type="transmembrane region" description="Helical" evidence="2">
    <location>
        <begin position="176"/>
        <end position="196"/>
    </location>
</feature>
<feature type="topological domain" description="Cytoplasmic" evidence="2">
    <location>
        <begin position="197"/>
        <end position="212"/>
    </location>
</feature>
<feature type="glycosylation site" description="N-linked (GlcNAc...) asparagine" evidence="2">
    <location>
        <position position="100"/>
    </location>
</feature>
<feature type="glycosylation site" description="N-linked (GlcNAc...) asparagine" evidence="2">
    <location>
        <position position="109"/>
    </location>
</feature>
<feature type="glycosylation site" description="N-linked (GlcNAc...) asparagine" evidence="2">
    <location>
        <position position="117"/>
    </location>
</feature>
<feature type="glycosylation site" description="N-linked (GlcNAc...) asparagine" evidence="2">
    <location>
        <position position="134"/>
    </location>
</feature>
<dbReference type="EMBL" id="BC084091">
    <property type="protein sequence ID" value="AAH84091.1"/>
    <property type="molecule type" value="mRNA"/>
</dbReference>
<dbReference type="RefSeq" id="NP_001088179.1">
    <property type="nucleotide sequence ID" value="NM_001094710.1"/>
</dbReference>
<dbReference type="SMR" id="Q5XHG6"/>
<dbReference type="GlyCosmos" id="Q5XHG6">
    <property type="glycosylation" value="4 sites, No reported glycans"/>
</dbReference>
<dbReference type="DNASU" id="495004"/>
<dbReference type="GeneID" id="495004"/>
<dbReference type="KEGG" id="xla:495004"/>
<dbReference type="AGR" id="Xenbase:XB-GENE-6254551"/>
<dbReference type="CTD" id="495004"/>
<dbReference type="Xenbase" id="XB-GENE-6254551">
    <property type="gene designation" value="tspan31.S"/>
</dbReference>
<dbReference type="OMA" id="AWGIMEN"/>
<dbReference type="OrthoDB" id="5845060at2759"/>
<dbReference type="Proteomes" id="UP000186698">
    <property type="component" value="Chromosome 2S"/>
</dbReference>
<dbReference type="Bgee" id="495004">
    <property type="expression patterns" value="Expressed in spleen and 19 other cell types or tissues"/>
</dbReference>
<dbReference type="GO" id="GO:0016020">
    <property type="term" value="C:membrane"/>
    <property type="evidence" value="ECO:0007669"/>
    <property type="project" value="UniProtKB-SubCell"/>
</dbReference>
<dbReference type="InterPro" id="IPR018499">
    <property type="entry name" value="Tetraspanin/Peripherin"/>
</dbReference>
<dbReference type="InterPro" id="IPR000301">
    <property type="entry name" value="Tetraspanin_animals"/>
</dbReference>
<dbReference type="PANTHER" id="PTHR19282">
    <property type="entry name" value="TETRASPANIN"/>
    <property type="match status" value="1"/>
</dbReference>
<dbReference type="PANTHER" id="PTHR19282:SF3">
    <property type="entry name" value="TETRASPANIN-31"/>
    <property type="match status" value="1"/>
</dbReference>
<dbReference type="Pfam" id="PF00335">
    <property type="entry name" value="Tetraspanin"/>
    <property type="match status" value="1"/>
</dbReference>
<dbReference type="PIRSF" id="PIRSF002419">
    <property type="entry name" value="Tetraspanin"/>
    <property type="match status" value="1"/>
</dbReference>
<dbReference type="PRINTS" id="PR00259">
    <property type="entry name" value="TMFOUR"/>
</dbReference>
<proteinExistence type="evidence at transcript level"/>
<comment type="subcellular location">
    <subcellularLocation>
        <location evidence="1">Membrane</location>
        <topology evidence="1">Multi-pass membrane protein</topology>
    </subcellularLocation>
</comment>
<comment type="similarity">
    <text evidence="3">Belongs to the tetraspanin (TM4SF) family.</text>
</comment>
<organism>
    <name type="scientific">Xenopus laevis</name>
    <name type="common">African clawed frog</name>
    <dbReference type="NCBI Taxonomy" id="8355"/>
    <lineage>
        <taxon>Eukaryota</taxon>
        <taxon>Metazoa</taxon>
        <taxon>Chordata</taxon>
        <taxon>Craniata</taxon>
        <taxon>Vertebrata</taxon>
        <taxon>Euteleostomi</taxon>
        <taxon>Amphibia</taxon>
        <taxon>Batrachia</taxon>
        <taxon>Anura</taxon>
        <taxon>Pipoidea</taxon>
        <taxon>Pipidae</taxon>
        <taxon>Xenopodinae</taxon>
        <taxon>Xenopus</taxon>
        <taxon>Xenopus</taxon>
    </lineage>
</organism>
<evidence type="ECO:0000250" key="1"/>
<evidence type="ECO:0000255" key="2"/>
<evidence type="ECO:0000305" key="3"/>
<protein>
    <recommendedName>
        <fullName>Tetraspanin-31-A</fullName>
        <shortName>Tspan-31-A</shortName>
    </recommendedName>
    <alternativeName>
        <fullName>Sarcoma-amplified sequence homolog A</fullName>
    </alternativeName>
</protein>
<reference key="1">
    <citation type="submission" date="2004-10" db="EMBL/GenBank/DDBJ databases">
        <authorList>
            <consortium name="NIH - Xenopus Gene Collection (XGC) project"/>
        </authorList>
    </citation>
    <scope>NUCLEOTIDE SEQUENCE [LARGE SCALE MRNA]</scope>
    <source>
        <tissue>Embryo</tissue>
    </source>
</reference>
<gene>
    <name type="primary">tspan31-a</name>
    <name type="synonym">sas-a</name>
</gene>
<sequence>MVCGGFTCSKNALCALNVVYMLVGLLLIGVAAWGKGFGIVSSIHIIGGVIAIGVFLLLIAIIGLIGAVSHHQVMLFIYMVVLILVFIFQFIVSCSCLAMNRSQQEYFLNTTWRRMSNETRLNLEETLECCGFLNTTEARELFNKDVALCSHVCPDPHKCLSCGDKMLNHADEALKILGGVGLFFSFTEILGVWLAFRFRNQKDPRANPSAFL</sequence>
<keyword id="KW-0325">Glycoprotein</keyword>
<keyword id="KW-0472">Membrane</keyword>
<keyword id="KW-1185">Reference proteome</keyword>
<keyword id="KW-0812">Transmembrane</keyword>
<keyword id="KW-1133">Transmembrane helix</keyword>
<name>TS31A_XENLA</name>